<comment type="catalytic activity">
    <reaction evidence="2 3">
        <text>D-erythro-1-(imidazol-4-yl)glycerol 3-phosphate = 3-(imidazol-4-yl)-2-oxopropyl phosphate + H2O</text>
        <dbReference type="Rhea" id="RHEA:11040"/>
        <dbReference type="ChEBI" id="CHEBI:15377"/>
        <dbReference type="ChEBI" id="CHEBI:57766"/>
        <dbReference type="ChEBI" id="CHEBI:58278"/>
        <dbReference type="EC" id="4.2.1.19"/>
    </reaction>
</comment>
<comment type="cofactor">
    <cofactor evidence="3">
        <name>Mn(2+)</name>
        <dbReference type="ChEBI" id="CHEBI:29035"/>
    </cofactor>
    <text evidence="3">Binds 2 manganese ions per subunit.</text>
</comment>
<comment type="activity regulation">
    <text evidence="3">Competitive inhibition by 3-amino-1,2,4-triazole (e.g. ATZ).</text>
</comment>
<comment type="biophysicochemical properties">
    <kinetics>
        <KM evidence="3">122 uM for imidazoleglycerol-phosphate (at pH 7.7 and 37 degrees Celsius)</KM>
        <text evidence="3">kcat is 1000 sec(-1) with imidazoleglycerol-phosphate as substrate (at pH 7.7 and 37 degrees Celsius).</text>
    </kinetics>
</comment>
<comment type="pathway">
    <text evidence="2 3">Amino-acid biosynthesis; L-histidine biosynthesis; L-histidine from 5-phospho-alpha-D-ribose 1-diphosphate: step 6/9.</text>
</comment>
<comment type="subcellular location">
    <subcellularLocation>
        <location evidence="2">Cytoplasm</location>
    </subcellularLocation>
</comment>
<comment type="similarity">
    <text evidence="2">Belongs to the imidazoleglycerol-phosphate dehydratase family.</text>
</comment>
<reference key="1">
    <citation type="journal article" date="1998" name="Nature">
        <title>Deciphering the biology of Mycobacterium tuberculosis from the complete genome sequence.</title>
        <authorList>
            <person name="Cole S.T."/>
            <person name="Brosch R."/>
            <person name="Parkhill J."/>
            <person name="Garnier T."/>
            <person name="Churcher C.M."/>
            <person name="Harris D.E."/>
            <person name="Gordon S.V."/>
            <person name="Eiglmeier K."/>
            <person name="Gas S."/>
            <person name="Barry C.E. III"/>
            <person name="Tekaia F."/>
            <person name="Badcock K."/>
            <person name="Basham D."/>
            <person name="Brown D."/>
            <person name="Chillingworth T."/>
            <person name="Connor R."/>
            <person name="Davies R.M."/>
            <person name="Devlin K."/>
            <person name="Feltwell T."/>
            <person name="Gentles S."/>
            <person name="Hamlin N."/>
            <person name="Holroyd S."/>
            <person name="Hornsby T."/>
            <person name="Jagels K."/>
            <person name="Krogh A."/>
            <person name="McLean J."/>
            <person name="Moule S."/>
            <person name="Murphy L.D."/>
            <person name="Oliver S."/>
            <person name="Osborne J."/>
            <person name="Quail M.A."/>
            <person name="Rajandream M.A."/>
            <person name="Rogers J."/>
            <person name="Rutter S."/>
            <person name="Seeger K."/>
            <person name="Skelton S."/>
            <person name="Squares S."/>
            <person name="Squares R."/>
            <person name="Sulston J.E."/>
            <person name="Taylor K."/>
            <person name="Whitehead S."/>
            <person name="Barrell B.G."/>
        </authorList>
    </citation>
    <scope>NUCLEOTIDE SEQUENCE [LARGE SCALE GENOMIC DNA]</scope>
    <source>
        <strain>ATCC 25618 / H37Rv</strain>
    </source>
</reference>
<reference key="2">
    <citation type="journal article" date="2011" name="Mol. Cell. Proteomics">
        <title>Proteogenomic analysis of Mycobacterium tuberculosis by high resolution mass spectrometry.</title>
        <authorList>
            <person name="Kelkar D.S."/>
            <person name="Kumar D."/>
            <person name="Kumar P."/>
            <person name="Balakrishnan L."/>
            <person name="Muthusamy B."/>
            <person name="Yadav A.K."/>
            <person name="Shrivastava P."/>
            <person name="Marimuthu A."/>
            <person name="Anand S."/>
            <person name="Sundaram H."/>
            <person name="Kingsbury R."/>
            <person name="Harsha H.C."/>
            <person name="Nair B."/>
            <person name="Prasad T.S."/>
            <person name="Chauhan D.S."/>
            <person name="Katoch K."/>
            <person name="Katoch V.M."/>
            <person name="Kumar P."/>
            <person name="Chaerkady R."/>
            <person name="Ramachandran S."/>
            <person name="Dash D."/>
            <person name="Pandey A."/>
        </authorList>
    </citation>
    <scope>IDENTIFICATION BY MASS SPECTROMETRY [LARGE SCALE ANALYSIS]</scope>
    <source>
        <strain>ATCC 25618 / H37Rv</strain>
    </source>
</reference>
<reference key="3">
    <citation type="journal article" date="2013" name="Acta Crystallogr. D">
        <title>Structures of native, substrate-bound and inhibited forms of Mycobacterium tuberculosis imidazoleglycerol-phosphate dehydratase.</title>
        <authorList>
            <person name="Ahangar M.S."/>
            <person name="Vyas R."/>
            <person name="Nasir N."/>
            <person name="Biswal B.K."/>
        </authorList>
    </citation>
    <scope>X-RAY CRYSTALLOGRAPHY (2.02 ANGSTROMS) OF 2-210 IN COMPLEX WITH MANGANESE; SUBSTRATE AND ATZ</scope>
    <scope>COFACTOR</scope>
    <scope>ACTIVITY REGULATION</scope>
    <scope>BIOPHYSICOCHEMICAL PROPERTIES</scope>
    <scope>CATALYTIC ACTIVITY</scope>
</reference>
<reference key="4">
    <citation type="submission" date="2017-03" db="PDB data bank">
        <title>Crystal structure of Mycobacterium tuberculosis HisB bound with an inhibitor.</title>
        <authorList>
            <person name="Kumar D."/>
            <person name="Jha B."/>
            <person name="Ahangar M.S."/>
            <person name="Kumar B.B."/>
        </authorList>
    </citation>
    <scope>X-RAY CRYSTALLOGRAPHY (1.75 ANGSTROMS) OF 2-210</scope>
</reference>
<reference key="5">
    <citation type="submission" date="2018-04" db="PDB data bank">
        <title>Crystal structure of Mycobacterium tuberculosis HisB in complex with a ligand.</title>
        <authorList>
            <person name="Kumar D."/>
            <person name="Pal R.K."/>
            <person name="Biswal B.K."/>
        </authorList>
    </citation>
    <scope>X-RAY CRYSTALLOGRAPHY (1.75 ANGSTROMS)</scope>
</reference>
<dbReference type="EC" id="4.2.1.19" evidence="2 3"/>
<dbReference type="EMBL" id="AL123456">
    <property type="protein sequence ID" value="CCP44365.1"/>
    <property type="molecule type" value="Genomic_DNA"/>
</dbReference>
<dbReference type="PIR" id="C70544">
    <property type="entry name" value="C70544"/>
</dbReference>
<dbReference type="RefSeq" id="NP_216117.1">
    <property type="nucleotide sequence ID" value="NC_000962.3"/>
</dbReference>
<dbReference type="RefSeq" id="WP_003407950.1">
    <property type="nucleotide sequence ID" value="NZ_NVQJ01000016.1"/>
</dbReference>
<dbReference type="PDB" id="4GQU">
    <property type="method" value="X-ray"/>
    <property type="resolution" value="2.02 A"/>
    <property type="chains" value="A=2-210"/>
</dbReference>
<dbReference type="PDB" id="5XDS">
    <property type="method" value="X-ray"/>
    <property type="resolution" value="1.75 A"/>
    <property type="chains" value="A=2-210"/>
</dbReference>
<dbReference type="PDB" id="5ZQN">
    <property type="method" value="X-ray"/>
    <property type="resolution" value="1.80 A"/>
    <property type="chains" value="A=1-210"/>
</dbReference>
<dbReference type="PDB" id="6KHH">
    <property type="method" value="X-ray"/>
    <property type="resolution" value="1.65 A"/>
    <property type="chains" value="A=10-200"/>
</dbReference>
<dbReference type="PDB" id="6YJH">
    <property type="method" value="X-ray"/>
    <property type="resolution" value="1.61 A"/>
    <property type="chains" value="A=10-200"/>
</dbReference>
<dbReference type="PDB" id="7DDV">
    <property type="method" value="X-ray"/>
    <property type="resolution" value="2.20 A"/>
    <property type="chains" value="A=2-210"/>
</dbReference>
<dbReference type="PDB" id="7DNQ">
    <property type="method" value="X-ray"/>
    <property type="resolution" value="2.28 A"/>
    <property type="chains" value="A=2-210"/>
</dbReference>
<dbReference type="PDB" id="7FCY">
    <property type="method" value="X-ray"/>
    <property type="resolution" value="1.85 A"/>
    <property type="chains" value="A=1-210"/>
</dbReference>
<dbReference type="PDB" id="8WMP">
    <property type="method" value="X-ray"/>
    <property type="resolution" value="1.75 A"/>
    <property type="chains" value="A=1-210"/>
</dbReference>
<dbReference type="PDBsum" id="4GQU"/>
<dbReference type="PDBsum" id="5XDS"/>
<dbReference type="PDBsum" id="5ZQN"/>
<dbReference type="PDBsum" id="6KHH"/>
<dbReference type="PDBsum" id="6YJH"/>
<dbReference type="PDBsum" id="7DDV"/>
<dbReference type="PDBsum" id="7DNQ"/>
<dbReference type="PDBsum" id="7FCY"/>
<dbReference type="PDBsum" id="8WMP"/>
<dbReference type="SMR" id="P9WML9"/>
<dbReference type="FunCoup" id="P9WML9">
    <property type="interactions" value="224"/>
</dbReference>
<dbReference type="STRING" id="83332.Rv1601"/>
<dbReference type="PaxDb" id="83332-Rv1601"/>
<dbReference type="DNASU" id="886274"/>
<dbReference type="GeneID" id="886274"/>
<dbReference type="KEGG" id="mtu:Rv1601"/>
<dbReference type="KEGG" id="mtv:RVBD_1601"/>
<dbReference type="TubercuList" id="Rv1601"/>
<dbReference type="eggNOG" id="COG0131">
    <property type="taxonomic scope" value="Bacteria"/>
</dbReference>
<dbReference type="InParanoid" id="P9WML9"/>
<dbReference type="OrthoDB" id="9790411at2"/>
<dbReference type="PhylomeDB" id="P9WML9"/>
<dbReference type="UniPathway" id="UPA00031">
    <property type="reaction ID" value="UER00011"/>
</dbReference>
<dbReference type="EvolutionaryTrace" id="P9WML9"/>
<dbReference type="Proteomes" id="UP000001584">
    <property type="component" value="Chromosome"/>
</dbReference>
<dbReference type="GO" id="GO:0005737">
    <property type="term" value="C:cytoplasm"/>
    <property type="evidence" value="ECO:0007669"/>
    <property type="project" value="UniProtKB-SubCell"/>
</dbReference>
<dbReference type="GO" id="GO:0004424">
    <property type="term" value="F:imidazoleglycerol-phosphate dehydratase activity"/>
    <property type="evidence" value="ECO:0000318"/>
    <property type="project" value="GO_Central"/>
</dbReference>
<dbReference type="GO" id="GO:0046872">
    <property type="term" value="F:metal ion binding"/>
    <property type="evidence" value="ECO:0007669"/>
    <property type="project" value="UniProtKB-KW"/>
</dbReference>
<dbReference type="GO" id="GO:0000105">
    <property type="term" value="P:L-histidine biosynthetic process"/>
    <property type="evidence" value="ECO:0000318"/>
    <property type="project" value="GO_Central"/>
</dbReference>
<dbReference type="CDD" id="cd07914">
    <property type="entry name" value="IGPD"/>
    <property type="match status" value="1"/>
</dbReference>
<dbReference type="FunFam" id="3.30.230.40:FF:000001">
    <property type="entry name" value="Imidazoleglycerol-phosphate dehydratase HisB"/>
    <property type="match status" value="1"/>
</dbReference>
<dbReference type="FunFam" id="3.30.230.40:FF:000003">
    <property type="entry name" value="Imidazoleglycerol-phosphate dehydratase HisB"/>
    <property type="match status" value="1"/>
</dbReference>
<dbReference type="Gene3D" id="3.30.230.40">
    <property type="entry name" value="Imidazole glycerol phosphate dehydratase, domain 1"/>
    <property type="match status" value="2"/>
</dbReference>
<dbReference type="HAMAP" id="MF_00076">
    <property type="entry name" value="HisB"/>
    <property type="match status" value="1"/>
</dbReference>
<dbReference type="InterPro" id="IPR038494">
    <property type="entry name" value="IGPD_sf"/>
</dbReference>
<dbReference type="InterPro" id="IPR000807">
    <property type="entry name" value="ImidazoleglycerolP_deHydtase"/>
</dbReference>
<dbReference type="InterPro" id="IPR020565">
    <property type="entry name" value="ImidazoleglycerP_deHydtase_CS"/>
</dbReference>
<dbReference type="InterPro" id="IPR020568">
    <property type="entry name" value="Ribosomal_Su5_D2-typ_SF"/>
</dbReference>
<dbReference type="NCBIfam" id="NF002110">
    <property type="entry name" value="PRK00951.1-6"/>
    <property type="match status" value="1"/>
</dbReference>
<dbReference type="NCBIfam" id="NF002111">
    <property type="entry name" value="PRK00951.2-1"/>
    <property type="match status" value="1"/>
</dbReference>
<dbReference type="NCBIfam" id="NF002114">
    <property type="entry name" value="PRK00951.2-4"/>
    <property type="match status" value="1"/>
</dbReference>
<dbReference type="PANTHER" id="PTHR23133:SF2">
    <property type="entry name" value="IMIDAZOLEGLYCEROL-PHOSPHATE DEHYDRATASE"/>
    <property type="match status" value="1"/>
</dbReference>
<dbReference type="PANTHER" id="PTHR23133">
    <property type="entry name" value="IMIDAZOLEGLYCEROL-PHOSPHATE DEHYDRATASE HIS7"/>
    <property type="match status" value="1"/>
</dbReference>
<dbReference type="Pfam" id="PF00475">
    <property type="entry name" value="IGPD"/>
    <property type="match status" value="1"/>
</dbReference>
<dbReference type="SUPFAM" id="SSF54211">
    <property type="entry name" value="Ribosomal protein S5 domain 2-like"/>
    <property type="match status" value="2"/>
</dbReference>
<dbReference type="PROSITE" id="PS00954">
    <property type="entry name" value="IGP_DEHYDRATASE_1"/>
    <property type="match status" value="1"/>
</dbReference>
<dbReference type="PROSITE" id="PS00955">
    <property type="entry name" value="IGP_DEHYDRATASE_2"/>
    <property type="match status" value="1"/>
</dbReference>
<gene>
    <name evidence="2" type="primary">hisB</name>
    <name type="ordered locus">Rv1601</name>
    <name type="ORF">MTCY336.03c</name>
</gene>
<proteinExistence type="evidence at protein level"/>
<accession>P9WML9</accession>
<accession>L0T8R8</accession>
<accession>O06590</accession>
<accession>P64368</accession>
<protein>
    <recommendedName>
        <fullName evidence="2">Imidazoleglycerol-phosphate dehydratase</fullName>
        <shortName evidence="2">IGPD</shortName>
        <ecNumber evidence="2 3">4.2.1.19</ecNumber>
    </recommendedName>
</protein>
<sequence length="210" mass="22770">MTTTQTAKASRRARIERRTRESDIVIELDLDGTGQVAVDTGVPFYDHMLTALGSHASFDLTVRATGDVEIEAHHTIEDTAIALGTALGQALGDKRGIRRFGDAFIPMDETLAHAAVDLSGRPYCVHTGEPDHLQHTTIAGSSVPYHTVINRHVFESLAANARIALHVRVLYGRDPHHITEAQYKAVARALRQAVEPDPRVSGVPSTKGAL</sequence>
<feature type="chain" id="PRO_0000158146" description="Imidazoleglycerol-phosphate dehydratase">
    <location>
        <begin position="1"/>
        <end position="210"/>
    </location>
</feature>
<feature type="binding site" evidence="1">
    <location>
        <position position="21"/>
    </location>
    <ligand>
        <name>substrate</name>
    </ligand>
</feature>
<feature type="binding site" evidence="3 6">
    <location>
        <begin position="47"/>
        <end position="55"/>
    </location>
    <ligand>
        <name>substrate</name>
    </ligand>
</feature>
<feature type="binding site" evidence="3 4">
    <location>
        <position position="47"/>
    </location>
    <ligand>
        <name>Mn(2+)</name>
        <dbReference type="ChEBI" id="CHEBI:29035"/>
        <label>1</label>
    </ligand>
</feature>
<feature type="binding site" evidence="3 5">
    <location>
        <begin position="73"/>
        <end position="77"/>
    </location>
    <ligand>
        <name>substrate</name>
    </ligand>
</feature>
<feature type="binding site" evidence="3 4">
    <location>
        <position position="73"/>
    </location>
    <ligand>
        <name>Mn(2+)</name>
        <dbReference type="ChEBI" id="CHEBI:29035"/>
        <label>2</label>
    </ligand>
</feature>
<feature type="binding site" evidence="3 4">
    <location>
        <position position="74"/>
    </location>
    <ligand>
        <name>Mn(2+)</name>
        <dbReference type="ChEBI" id="CHEBI:29035"/>
        <label>1</label>
    </ligand>
</feature>
<feature type="binding site" evidence="3 4">
    <location>
        <position position="77"/>
    </location>
    <ligand>
        <name>Mn(2+)</name>
        <dbReference type="ChEBI" id="CHEBI:29035"/>
        <label>2</label>
    </ligand>
</feature>
<feature type="binding site" evidence="1">
    <location>
        <position position="99"/>
    </location>
    <ligand>
        <name>substrate</name>
    </ligand>
</feature>
<feature type="binding site" evidence="1">
    <location>
        <position position="121"/>
    </location>
    <ligand>
        <name>substrate</name>
    </ligand>
</feature>
<feature type="binding site" evidence="3 4">
    <location>
        <position position="152"/>
    </location>
    <ligand>
        <name>Mn(2+)</name>
        <dbReference type="ChEBI" id="CHEBI:29035"/>
        <label>2</label>
    </ligand>
</feature>
<feature type="binding site" evidence="3 6">
    <location>
        <begin position="176"/>
        <end position="184"/>
    </location>
    <ligand>
        <name>substrate</name>
    </ligand>
</feature>
<feature type="binding site" evidence="3 4">
    <location>
        <position position="176"/>
    </location>
    <ligand>
        <name>Mn(2+)</name>
        <dbReference type="ChEBI" id="CHEBI:29035"/>
        <label>1</label>
    </ligand>
</feature>
<feature type="binding site" evidence="3 4">
    <location>
        <position position="177"/>
    </location>
    <ligand>
        <name>Mn(2+)</name>
        <dbReference type="ChEBI" id="CHEBI:29035"/>
        <label>2</label>
    </ligand>
</feature>
<feature type="binding site" evidence="3 4">
    <location>
        <position position="180"/>
    </location>
    <ligand>
        <name>Mn(2+)</name>
        <dbReference type="ChEBI" id="CHEBI:29035"/>
        <label>1</label>
    </ligand>
</feature>
<feature type="binding site" evidence="1">
    <location>
        <begin position="205"/>
        <end position="207"/>
    </location>
    <ligand>
        <name>substrate</name>
    </ligand>
</feature>
<feature type="strand" evidence="7">
    <location>
        <begin position="12"/>
        <end position="18"/>
    </location>
</feature>
<feature type="strand" evidence="7">
    <location>
        <begin position="20"/>
        <end position="31"/>
    </location>
</feature>
<feature type="strand" evidence="7">
    <location>
        <begin position="36"/>
        <end position="39"/>
    </location>
</feature>
<feature type="helix" evidence="7">
    <location>
        <begin position="43"/>
        <end position="55"/>
    </location>
</feature>
<feature type="strand" evidence="7">
    <location>
        <begin position="59"/>
        <end position="66"/>
    </location>
</feature>
<feature type="turn" evidence="7">
    <location>
        <begin position="68"/>
        <end position="70"/>
    </location>
</feature>
<feature type="helix" evidence="7">
    <location>
        <begin position="73"/>
        <end position="91"/>
    </location>
</feature>
<feature type="strand" evidence="7">
    <location>
        <begin position="100"/>
        <end position="107"/>
    </location>
</feature>
<feature type="strand" evidence="7">
    <location>
        <begin position="110"/>
        <end position="117"/>
    </location>
</feature>
<feature type="strand" evidence="7">
    <location>
        <begin position="122"/>
        <end position="127"/>
    </location>
</feature>
<feature type="helix" evidence="7">
    <location>
        <begin position="131"/>
        <end position="134"/>
    </location>
</feature>
<feature type="strand" evidence="7">
    <location>
        <begin position="141"/>
        <end position="143"/>
    </location>
</feature>
<feature type="helix" evidence="7">
    <location>
        <begin position="149"/>
        <end position="161"/>
    </location>
</feature>
<feature type="strand" evidence="7">
    <location>
        <begin position="164"/>
        <end position="171"/>
    </location>
</feature>
<feature type="helix" evidence="7">
    <location>
        <begin position="175"/>
        <end position="194"/>
    </location>
</feature>
<evidence type="ECO:0000250" key="1">
    <source>
        <dbReference type="UniProtKB" id="O23346"/>
    </source>
</evidence>
<evidence type="ECO:0000255" key="2">
    <source>
        <dbReference type="HAMAP-Rule" id="MF_00076"/>
    </source>
</evidence>
<evidence type="ECO:0000269" key="3">
    <source>
    </source>
</evidence>
<evidence type="ECO:0007744" key="4">
    <source>
        <dbReference type="PDB" id="4GQU"/>
    </source>
</evidence>
<evidence type="ECO:0007744" key="5">
    <source>
        <dbReference type="PDB" id="5XDS"/>
    </source>
</evidence>
<evidence type="ECO:0007744" key="6">
    <source>
        <dbReference type="PDB" id="5ZQN"/>
    </source>
</evidence>
<evidence type="ECO:0007829" key="7">
    <source>
        <dbReference type="PDB" id="6YJH"/>
    </source>
</evidence>
<keyword id="KW-0002">3D-structure</keyword>
<keyword id="KW-0028">Amino-acid biosynthesis</keyword>
<keyword id="KW-0963">Cytoplasm</keyword>
<keyword id="KW-0368">Histidine biosynthesis</keyword>
<keyword id="KW-0456">Lyase</keyword>
<keyword id="KW-0464">Manganese</keyword>
<keyword id="KW-0479">Metal-binding</keyword>
<keyword id="KW-1185">Reference proteome</keyword>
<organism>
    <name type="scientific">Mycobacterium tuberculosis (strain ATCC 25618 / H37Rv)</name>
    <dbReference type="NCBI Taxonomy" id="83332"/>
    <lineage>
        <taxon>Bacteria</taxon>
        <taxon>Bacillati</taxon>
        <taxon>Actinomycetota</taxon>
        <taxon>Actinomycetes</taxon>
        <taxon>Mycobacteriales</taxon>
        <taxon>Mycobacteriaceae</taxon>
        <taxon>Mycobacterium</taxon>
        <taxon>Mycobacterium tuberculosis complex</taxon>
    </lineage>
</organism>
<name>HIS7_MYCTU</name>